<feature type="chain" id="PRO_0000131544" description="Small ribosomal subunit protein uS5">
    <location>
        <begin position="1"/>
        <end position="183"/>
    </location>
</feature>
<feature type="domain" description="S5 DRBM" evidence="1">
    <location>
        <begin position="11"/>
        <end position="71"/>
    </location>
</feature>
<organism>
    <name type="scientific">Micrococcus luteus</name>
    <name type="common">Micrococcus lysodeikticus</name>
    <dbReference type="NCBI Taxonomy" id="1270"/>
    <lineage>
        <taxon>Bacteria</taxon>
        <taxon>Bacillati</taxon>
        <taxon>Actinomycetota</taxon>
        <taxon>Actinomycetes</taxon>
        <taxon>Micrococcales</taxon>
        <taxon>Micrococcaceae</taxon>
        <taxon>Micrococcus</taxon>
    </lineage>
</organism>
<protein>
    <recommendedName>
        <fullName evidence="1">Small ribosomal subunit protein uS5</fullName>
    </recommendedName>
    <alternativeName>
        <fullName evidence="2">30S ribosomal protein S5</fullName>
    </alternativeName>
</protein>
<sequence length="183" mass="19159">MAPRTTRKDQFLERVVGINRVSKVGRRFSFTALVVVGDGDGTVGVGYGKAKEVPAAIQKAVEEAKKSFFRVPRVGSTIPHLVQGEDAAGVVLLRPASPGTAVIAGGPVRAVLECAGIHDVLSKSMGSVNAINIVRGTVEGLKKLKSPQAVAARRGKALDEIAPHAMLRTMENDRAQKSAKAGA</sequence>
<accession>P33105</accession>
<comment type="function">
    <text evidence="1">With S4 and S12 plays an important role in translational accuracy.</text>
</comment>
<comment type="function">
    <text evidence="1">Located at the back of the 30S subunit body where it stabilizes the conformation of the head with respect to the body.</text>
</comment>
<comment type="subunit">
    <text evidence="1">Part of the 30S ribosomal subunit. Contacts proteins S4 and S8.</text>
</comment>
<comment type="domain">
    <text>The N-terminal domain interacts with the head of the 30S subunit; the C-terminal domain interacts with the body and contacts protein S4. The interaction surface between S4 and S5 is involved in control of translational fidelity.</text>
</comment>
<comment type="similarity">
    <text evidence="1">Belongs to the universal ribosomal protein uS5 family.</text>
</comment>
<reference key="1">
    <citation type="journal article" date="1989" name="J. Mol. Evol.">
        <title>Spectinomycin operon of Micrococcus luteus: evolutionary implications of organization and novel codon usage.</title>
        <authorList>
            <person name="Ohama T."/>
            <person name="Muto A."/>
            <person name="Osawa S."/>
        </authorList>
    </citation>
    <scope>NUCLEOTIDE SEQUENCE [GENOMIC DNA]</scope>
</reference>
<dbReference type="EMBL" id="X17524">
    <property type="protein sequence ID" value="CAA35564.1"/>
    <property type="molecule type" value="Genomic_DNA"/>
</dbReference>
<dbReference type="PIR" id="S29888">
    <property type="entry name" value="S29888"/>
</dbReference>
<dbReference type="SMR" id="P33105"/>
<dbReference type="STRING" id="1232675.GCA_000309825_02141"/>
<dbReference type="GO" id="GO:0015935">
    <property type="term" value="C:small ribosomal subunit"/>
    <property type="evidence" value="ECO:0007669"/>
    <property type="project" value="InterPro"/>
</dbReference>
<dbReference type="GO" id="GO:0019843">
    <property type="term" value="F:rRNA binding"/>
    <property type="evidence" value="ECO:0007669"/>
    <property type="project" value="UniProtKB-UniRule"/>
</dbReference>
<dbReference type="GO" id="GO:0003735">
    <property type="term" value="F:structural constituent of ribosome"/>
    <property type="evidence" value="ECO:0007669"/>
    <property type="project" value="InterPro"/>
</dbReference>
<dbReference type="GO" id="GO:0006412">
    <property type="term" value="P:translation"/>
    <property type="evidence" value="ECO:0007669"/>
    <property type="project" value="UniProtKB-UniRule"/>
</dbReference>
<dbReference type="FunFam" id="3.30.160.20:FF:000001">
    <property type="entry name" value="30S ribosomal protein S5"/>
    <property type="match status" value="1"/>
</dbReference>
<dbReference type="FunFam" id="3.30.230.10:FF:000002">
    <property type="entry name" value="30S ribosomal protein S5"/>
    <property type="match status" value="1"/>
</dbReference>
<dbReference type="Gene3D" id="3.30.160.20">
    <property type="match status" value="1"/>
</dbReference>
<dbReference type="Gene3D" id="3.30.230.10">
    <property type="match status" value="1"/>
</dbReference>
<dbReference type="HAMAP" id="MF_01307_B">
    <property type="entry name" value="Ribosomal_uS5_B"/>
    <property type="match status" value="1"/>
</dbReference>
<dbReference type="InterPro" id="IPR020568">
    <property type="entry name" value="Ribosomal_Su5_D2-typ_SF"/>
</dbReference>
<dbReference type="InterPro" id="IPR000851">
    <property type="entry name" value="Ribosomal_uS5"/>
</dbReference>
<dbReference type="InterPro" id="IPR005712">
    <property type="entry name" value="Ribosomal_uS5_bac-type"/>
</dbReference>
<dbReference type="InterPro" id="IPR005324">
    <property type="entry name" value="Ribosomal_uS5_C"/>
</dbReference>
<dbReference type="InterPro" id="IPR013810">
    <property type="entry name" value="Ribosomal_uS5_N"/>
</dbReference>
<dbReference type="InterPro" id="IPR018192">
    <property type="entry name" value="Ribosomal_uS5_N_CS"/>
</dbReference>
<dbReference type="InterPro" id="IPR014721">
    <property type="entry name" value="Ribsml_uS5_D2-typ_fold_subgr"/>
</dbReference>
<dbReference type="NCBIfam" id="TIGR01021">
    <property type="entry name" value="rpsE_bact"/>
    <property type="match status" value="1"/>
</dbReference>
<dbReference type="PANTHER" id="PTHR48277">
    <property type="entry name" value="MITOCHONDRIAL RIBOSOMAL PROTEIN S5"/>
    <property type="match status" value="1"/>
</dbReference>
<dbReference type="PANTHER" id="PTHR48277:SF1">
    <property type="entry name" value="MITOCHONDRIAL RIBOSOMAL PROTEIN S5"/>
    <property type="match status" value="1"/>
</dbReference>
<dbReference type="Pfam" id="PF00333">
    <property type="entry name" value="Ribosomal_S5"/>
    <property type="match status" value="1"/>
</dbReference>
<dbReference type="Pfam" id="PF03719">
    <property type="entry name" value="Ribosomal_S5_C"/>
    <property type="match status" value="1"/>
</dbReference>
<dbReference type="SUPFAM" id="SSF54768">
    <property type="entry name" value="dsRNA-binding domain-like"/>
    <property type="match status" value="1"/>
</dbReference>
<dbReference type="SUPFAM" id="SSF54211">
    <property type="entry name" value="Ribosomal protein S5 domain 2-like"/>
    <property type="match status" value="1"/>
</dbReference>
<dbReference type="PROSITE" id="PS00585">
    <property type="entry name" value="RIBOSOMAL_S5"/>
    <property type="match status" value="1"/>
</dbReference>
<dbReference type="PROSITE" id="PS50881">
    <property type="entry name" value="S5_DSRBD"/>
    <property type="match status" value="1"/>
</dbReference>
<gene>
    <name evidence="1" type="primary">rpsE</name>
</gene>
<proteinExistence type="inferred from homology"/>
<name>RS5_MICLU</name>
<evidence type="ECO:0000255" key="1">
    <source>
        <dbReference type="HAMAP-Rule" id="MF_01307"/>
    </source>
</evidence>
<evidence type="ECO:0000305" key="2"/>
<keyword id="KW-0687">Ribonucleoprotein</keyword>
<keyword id="KW-0689">Ribosomal protein</keyword>
<keyword id="KW-0694">RNA-binding</keyword>
<keyword id="KW-0699">rRNA-binding</keyword>